<dbReference type="EC" id="3.6.1.41" evidence="1"/>
<dbReference type="EMBL" id="FM209186">
    <property type="protein sequence ID" value="CAW25314.1"/>
    <property type="molecule type" value="Genomic_DNA"/>
</dbReference>
<dbReference type="RefSeq" id="WP_003113213.1">
    <property type="nucleotide sequence ID" value="NC_011770.1"/>
</dbReference>
<dbReference type="SMR" id="B7V4H6"/>
<dbReference type="KEGG" id="pag:PLES_05871"/>
<dbReference type="HOGENOM" id="CLU_056184_2_0_6"/>
<dbReference type="GO" id="GO:0008803">
    <property type="term" value="F:bis(5'-nucleosyl)-tetraphosphatase (symmetrical) activity"/>
    <property type="evidence" value="ECO:0007669"/>
    <property type="project" value="UniProtKB-UniRule"/>
</dbReference>
<dbReference type="CDD" id="cd07422">
    <property type="entry name" value="MPP_ApaH"/>
    <property type="match status" value="1"/>
</dbReference>
<dbReference type="Gene3D" id="3.60.21.10">
    <property type="match status" value="1"/>
</dbReference>
<dbReference type="HAMAP" id="MF_00199">
    <property type="entry name" value="ApaH"/>
    <property type="match status" value="1"/>
</dbReference>
<dbReference type="InterPro" id="IPR004617">
    <property type="entry name" value="ApaH"/>
</dbReference>
<dbReference type="InterPro" id="IPR004843">
    <property type="entry name" value="Calcineurin-like_PHP_ApaH"/>
</dbReference>
<dbReference type="InterPro" id="IPR029052">
    <property type="entry name" value="Metallo-depent_PP-like"/>
</dbReference>
<dbReference type="NCBIfam" id="TIGR00668">
    <property type="entry name" value="apaH"/>
    <property type="match status" value="1"/>
</dbReference>
<dbReference type="NCBIfam" id="NF001204">
    <property type="entry name" value="PRK00166.1"/>
    <property type="match status" value="1"/>
</dbReference>
<dbReference type="PANTHER" id="PTHR40942">
    <property type="match status" value="1"/>
</dbReference>
<dbReference type="PANTHER" id="PTHR40942:SF4">
    <property type="entry name" value="CYTOCHROME C5"/>
    <property type="match status" value="1"/>
</dbReference>
<dbReference type="Pfam" id="PF00149">
    <property type="entry name" value="Metallophos"/>
    <property type="match status" value="1"/>
</dbReference>
<dbReference type="PIRSF" id="PIRSF000903">
    <property type="entry name" value="B5n-ttraPtase_sm"/>
    <property type="match status" value="1"/>
</dbReference>
<dbReference type="SUPFAM" id="SSF56300">
    <property type="entry name" value="Metallo-dependent phosphatases"/>
    <property type="match status" value="1"/>
</dbReference>
<protein>
    <recommendedName>
        <fullName evidence="1">Bis(5'-nucleosyl)-tetraphosphatase, symmetrical</fullName>
        <ecNumber evidence="1">3.6.1.41</ecNumber>
    </recommendedName>
    <alternativeName>
        <fullName evidence="1">Ap4A hydrolase</fullName>
    </alternativeName>
    <alternativeName>
        <fullName evidence="1">Diadenosine 5',5'''-P1,P4-tetraphosphate pyrophosphohydrolase</fullName>
    </alternativeName>
    <alternativeName>
        <fullName evidence="1">Diadenosine tetraphosphatase</fullName>
    </alternativeName>
</protein>
<keyword id="KW-0378">Hydrolase</keyword>
<gene>
    <name evidence="1" type="primary">apaH</name>
    <name type="ordered locus">PLES_05871</name>
</gene>
<evidence type="ECO:0000255" key="1">
    <source>
        <dbReference type="HAMAP-Rule" id="MF_00199"/>
    </source>
</evidence>
<accession>B7V4H6</accession>
<comment type="function">
    <text evidence="1">Hydrolyzes diadenosine 5',5'''-P1,P4-tetraphosphate to yield ADP.</text>
</comment>
<comment type="catalytic activity">
    <reaction evidence="1">
        <text>P(1),P(4)-bis(5'-adenosyl) tetraphosphate + H2O = 2 ADP + 2 H(+)</text>
        <dbReference type="Rhea" id="RHEA:24252"/>
        <dbReference type="ChEBI" id="CHEBI:15377"/>
        <dbReference type="ChEBI" id="CHEBI:15378"/>
        <dbReference type="ChEBI" id="CHEBI:58141"/>
        <dbReference type="ChEBI" id="CHEBI:456216"/>
        <dbReference type="EC" id="3.6.1.41"/>
    </reaction>
</comment>
<comment type="similarity">
    <text evidence="1">Belongs to the Ap4A hydrolase family.</text>
</comment>
<organism>
    <name type="scientific">Pseudomonas aeruginosa (strain LESB58)</name>
    <dbReference type="NCBI Taxonomy" id="557722"/>
    <lineage>
        <taxon>Bacteria</taxon>
        <taxon>Pseudomonadati</taxon>
        <taxon>Pseudomonadota</taxon>
        <taxon>Gammaproteobacteria</taxon>
        <taxon>Pseudomonadales</taxon>
        <taxon>Pseudomonadaceae</taxon>
        <taxon>Pseudomonas</taxon>
    </lineage>
</organism>
<sequence length="283" mass="32019">MAVYAVGDLQGCLDPLKCLLERVAFDPAKDRLWLVGDLVNRGPQSLETLRFLYAMRESVVSVLGNHDLHLLAVAHKSERLKKSDTLREILEAPDREPLLDWLRRLPLLHYDEQRKVALVHAGIPPQWSLEKARLRAAEVEQALRDDQRLPLFLDGMYGNEPAKWDKKLHGIDRLRVITNYFTRMRFCTEDGKLDLKSKEGLDTAPPGYAPWFSFPSRKTRGEKIIFGHWAALEGHCDEPGLFALDTGCVWGARMTLLNVDSGERLSCDCAEQRAPARPAATPA</sequence>
<reference key="1">
    <citation type="journal article" date="2009" name="Genome Res.">
        <title>Newly introduced genomic prophage islands are critical determinants of in vivo competitiveness in the Liverpool epidemic strain of Pseudomonas aeruginosa.</title>
        <authorList>
            <person name="Winstanley C."/>
            <person name="Langille M.G.I."/>
            <person name="Fothergill J.L."/>
            <person name="Kukavica-Ibrulj I."/>
            <person name="Paradis-Bleau C."/>
            <person name="Sanschagrin F."/>
            <person name="Thomson N.R."/>
            <person name="Winsor G.L."/>
            <person name="Quail M.A."/>
            <person name="Lennard N."/>
            <person name="Bignell A."/>
            <person name="Clarke L."/>
            <person name="Seeger K."/>
            <person name="Saunders D."/>
            <person name="Harris D."/>
            <person name="Parkhill J."/>
            <person name="Hancock R.E.W."/>
            <person name="Brinkman F.S.L."/>
            <person name="Levesque R.C."/>
        </authorList>
    </citation>
    <scope>NUCLEOTIDE SEQUENCE [LARGE SCALE GENOMIC DNA]</scope>
    <source>
        <strain>LESB58</strain>
    </source>
</reference>
<feature type="chain" id="PRO_1000118698" description="Bis(5'-nucleosyl)-tetraphosphatase, symmetrical">
    <location>
        <begin position="1"/>
        <end position="283"/>
    </location>
</feature>
<name>APAH_PSEA8</name>
<proteinExistence type="inferred from homology"/>